<keyword id="KW-0238">DNA-binding</keyword>
<keyword id="KW-0275">Fatty acid biosynthesis</keyword>
<keyword id="KW-0276">Fatty acid metabolism</keyword>
<keyword id="KW-0444">Lipid biosynthesis</keyword>
<keyword id="KW-0443">Lipid metabolism</keyword>
<keyword id="KW-0678">Repressor</keyword>
<keyword id="KW-0804">Transcription</keyword>
<keyword id="KW-0805">Transcription regulation</keyword>
<name>FAPR_THEPX</name>
<reference key="1">
    <citation type="submission" date="2008-01" db="EMBL/GenBank/DDBJ databases">
        <title>Complete sequence of Thermoanaerobacter sp. X514.</title>
        <authorList>
            <consortium name="US DOE Joint Genome Institute"/>
            <person name="Copeland A."/>
            <person name="Lucas S."/>
            <person name="Lapidus A."/>
            <person name="Barry K."/>
            <person name="Glavina del Rio T."/>
            <person name="Dalin E."/>
            <person name="Tice H."/>
            <person name="Pitluck S."/>
            <person name="Bruce D."/>
            <person name="Goodwin L."/>
            <person name="Saunders E."/>
            <person name="Brettin T."/>
            <person name="Detter J.C."/>
            <person name="Han C."/>
            <person name="Schmutz J."/>
            <person name="Larimer F."/>
            <person name="Land M."/>
            <person name="Hauser L."/>
            <person name="Kyrpides N."/>
            <person name="Kim E."/>
            <person name="Hemme C."/>
            <person name="Fields M.W."/>
            <person name="He Z."/>
            <person name="Zhou J."/>
            <person name="Richardson P."/>
        </authorList>
    </citation>
    <scope>NUCLEOTIDE SEQUENCE [LARGE SCALE GENOMIC DNA]</scope>
    <source>
        <strain>X514</strain>
    </source>
</reference>
<evidence type="ECO:0000255" key="1">
    <source>
        <dbReference type="HAMAP-Rule" id="MF_01814"/>
    </source>
</evidence>
<sequence>MAVRMSKVERQRLLKEKINTNPFYTDDELAEMFGVSVQTIRLDRMELGIPEVRERIKSVAEENYQKVRTITGTEVVGELIDLELGKRGISIFEPTEDMVFVKTKIVKGQYIYSQAESLAMSVIDASAALIGVANIKYKFPVKVGDRLVAKAEVIRQRGNKYFVWVKIKVKDKEVFRGKFILVAIDEDFLKKRSDTVEVSN</sequence>
<feature type="chain" id="PRO_1000187837" description="Transcription factor FapR">
    <location>
        <begin position="1"/>
        <end position="200"/>
    </location>
</feature>
<organism>
    <name type="scientific">Thermoanaerobacter sp. (strain X514)</name>
    <dbReference type="NCBI Taxonomy" id="399726"/>
    <lineage>
        <taxon>Bacteria</taxon>
        <taxon>Bacillati</taxon>
        <taxon>Bacillota</taxon>
        <taxon>Clostridia</taxon>
        <taxon>Thermoanaerobacterales</taxon>
        <taxon>Thermoanaerobacteraceae</taxon>
        <taxon>Thermoanaerobacter</taxon>
    </lineage>
</organism>
<proteinExistence type="inferred from homology"/>
<comment type="function">
    <text evidence="1">Transcriptional factor involved in regulation of membrane lipid biosynthesis by repressing genes involved in fatty acid and phospholipid metabolism.</text>
</comment>
<comment type="similarity">
    <text evidence="1">Belongs to the FapR family.</text>
</comment>
<protein>
    <recommendedName>
        <fullName evidence="1">Transcription factor FapR</fullName>
    </recommendedName>
    <alternativeName>
        <fullName evidence="1">Fatty acid and phospholipid biosynthesis regulator</fullName>
    </alternativeName>
</protein>
<accession>B0K1W6</accession>
<gene>
    <name evidence="1" type="primary">fapR</name>
    <name type="ordered locus">Teth514_1728</name>
</gene>
<dbReference type="EMBL" id="CP000923">
    <property type="protein sequence ID" value="ABY93014.1"/>
    <property type="molecule type" value="Genomic_DNA"/>
</dbReference>
<dbReference type="RefSeq" id="WP_003869201.1">
    <property type="nucleotide sequence ID" value="NC_010320.1"/>
</dbReference>
<dbReference type="SMR" id="B0K1W6"/>
<dbReference type="KEGG" id="tex:Teth514_1728"/>
<dbReference type="HOGENOM" id="CLU_095708_0_0_9"/>
<dbReference type="Proteomes" id="UP000002155">
    <property type="component" value="Chromosome"/>
</dbReference>
<dbReference type="GO" id="GO:0003677">
    <property type="term" value="F:DNA binding"/>
    <property type="evidence" value="ECO:0007669"/>
    <property type="project" value="UniProtKB-KW"/>
</dbReference>
<dbReference type="GO" id="GO:0003700">
    <property type="term" value="F:DNA-binding transcription factor activity"/>
    <property type="evidence" value="ECO:0007669"/>
    <property type="project" value="UniProtKB-UniRule"/>
</dbReference>
<dbReference type="GO" id="GO:0006633">
    <property type="term" value="P:fatty acid biosynthetic process"/>
    <property type="evidence" value="ECO:0007669"/>
    <property type="project" value="UniProtKB-KW"/>
</dbReference>
<dbReference type="GO" id="GO:0045892">
    <property type="term" value="P:negative regulation of DNA-templated transcription"/>
    <property type="evidence" value="ECO:0007669"/>
    <property type="project" value="UniProtKB-UniRule"/>
</dbReference>
<dbReference type="GO" id="GO:0045717">
    <property type="term" value="P:negative regulation of fatty acid biosynthetic process"/>
    <property type="evidence" value="ECO:0007669"/>
    <property type="project" value="UniProtKB-UniRule"/>
</dbReference>
<dbReference type="CDD" id="cd03440">
    <property type="entry name" value="hot_dog"/>
    <property type="match status" value="1"/>
</dbReference>
<dbReference type="Gene3D" id="3.10.129.10">
    <property type="entry name" value="Hotdog Thioesterase"/>
    <property type="match status" value="1"/>
</dbReference>
<dbReference type="Gene3D" id="1.10.10.10">
    <property type="entry name" value="Winged helix-like DNA-binding domain superfamily/Winged helix DNA-binding domain"/>
    <property type="match status" value="1"/>
</dbReference>
<dbReference type="HAMAP" id="MF_01814">
    <property type="entry name" value="Transcrip_fact_FapR"/>
    <property type="match status" value="1"/>
</dbReference>
<dbReference type="InterPro" id="IPR029069">
    <property type="entry name" value="HotDog_dom_sf"/>
</dbReference>
<dbReference type="InterPro" id="IPR006683">
    <property type="entry name" value="Thioestr_dom"/>
</dbReference>
<dbReference type="InterPro" id="IPR017275">
    <property type="entry name" value="Transcription_factor_FapR"/>
</dbReference>
<dbReference type="InterPro" id="IPR036388">
    <property type="entry name" value="WH-like_DNA-bd_sf"/>
</dbReference>
<dbReference type="InterPro" id="IPR036390">
    <property type="entry name" value="WH_DNA-bd_sf"/>
</dbReference>
<dbReference type="NCBIfam" id="NF003359">
    <property type="entry name" value="PRK04424.1"/>
    <property type="match status" value="1"/>
</dbReference>
<dbReference type="Pfam" id="PF03061">
    <property type="entry name" value="4HBT"/>
    <property type="match status" value="1"/>
</dbReference>
<dbReference type="PIRSF" id="PIRSF037733">
    <property type="entry name" value="Transcription_factor_FapR"/>
    <property type="match status" value="1"/>
</dbReference>
<dbReference type="SUPFAM" id="SSF54637">
    <property type="entry name" value="Thioesterase/thiol ester dehydrase-isomerase"/>
    <property type="match status" value="1"/>
</dbReference>
<dbReference type="SUPFAM" id="SSF46785">
    <property type="entry name" value="Winged helix' DNA-binding domain"/>
    <property type="match status" value="1"/>
</dbReference>